<comment type="function">
    <text evidence="1">Thiolesterase that catalyzes the hydrolysis of S-D-lactoyl-glutathione to form glutathione and D-lactic acid.</text>
</comment>
<comment type="catalytic activity">
    <reaction evidence="1">
        <text>an S-(2-hydroxyacyl)glutathione + H2O = a 2-hydroxy carboxylate + glutathione + H(+)</text>
        <dbReference type="Rhea" id="RHEA:21864"/>
        <dbReference type="ChEBI" id="CHEBI:15377"/>
        <dbReference type="ChEBI" id="CHEBI:15378"/>
        <dbReference type="ChEBI" id="CHEBI:57925"/>
        <dbReference type="ChEBI" id="CHEBI:58896"/>
        <dbReference type="ChEBI" id="CHEBI:71261"/>
        <dbReference type="EC" id="3.1.2.6"/>
    </reaction>
</comment>
<comment type="cofactor">
    <cofactor evidence="1">
        <name>Zn(2+)</name>
        <dbReference type="ChEBI" id="CHEBI:29105"/>
    </cofactor>
    <text evidence="1">Binds 2 Zn(2+) ions per subunit.</text>
</comment>
<comment type="pathway">
    <text evidence="1">Secondary metabolite metabolism; methylglyoxal degradation; (R)-lactate from methylglyoxal: step 2/2.</text>
</comment>
<comment type="subunit">
    <text evidence="1">Monomer.</text>
</comment>
<comment type="similarity">
    <text evidence="1">Belongs to the metallo-beta-lactamase superfamily. Glyoxalase II family.</text>
</comment>
<reference key="1">
    <citation type="submission" date="2005-07" db="EMBL/GenBank/DDBJ databases">
        <title>Complete sequence of Synechococcus sp. CC9605.</title>
        <authorList>
            <consortium name="US DOE Joint Genome Institute"/>
            <person name="Copeland A."/>
            <person name="Lucas S."/>
            <person name="Lapidus A."/>
            <person name="Barry K."/>
            <person name="Detter J.C."/>
            <person name="Glavina T."/>
            <person name="Hammon N."/>
            <person name="Israni S."/>
            <person name="Pitluck S."/>
            <person name="Schmutz J."/>
            <person name="Martinez M."/>
            <person name="Larimer F."/>
            <person name="Land M."/>
            <person name="Kyrpides N."/>
            <person name="Ivanova N."/>
            <person name="Richardson P."/>
        </authorList>
    </citation>
    <scope>NUCLEOTIDE SEQUENCE [LARGE SCALE GENOMIC DNA]</scope>
    <source>
        <strain>CC9605</strain>
    </source>
</reference>
<feature type="chain" id="PRO_0000309714" description="Hydroxyacylglutathione hydrolase">
    <location>
        <begin position="1"/>
        <end position="249"/>
    </location>
</feature>
<feature type="binding site" evidence="1">
    <location>
        <position position="54"/>
    </location>
    <ligand>
        <name>Zn(2+)</name>
        <dbReference type="ChEBI" id="CHEBI:29105"/>
        <label>1</label>
    </ligand>
</feature>
<feature type="binding site" evidence="1">
    <location>
        <position position="56"/>
    </location>
    <ligand>
        <name>Zn(2+)</name>
        <dbReference type="ChEBI" id="CHEBI:29105"/>
        <label>1</label>
    </ligand>
</feature>
<feature type="binding site" evidence="1">
    <location>
        <position position="58"/>
    </location>
    <ligand>
        <name>Zn(2+)</name>
        <dbReference type="ChEBI" id="CHEBI:29105"/>
        <label>2</label>
    </ligand>
</feature>
<feature type="binding site" evidence="1">
    <location>
        <position position="59"/>
    </location>
    <ligand>
        <name>Zn(2+)</name>
        <dbReference type="ChEBI" id="CHEBI:29105"/>
        <label>2</label>
    </ligand>
</feature>
<feature type="binding site" evidence="1">
    <location>
        <position position="113"/>
    </location>
    <ligand>
        <name>Zn(2+)</name>
        <dbReference type="ChEBI" id="CHEBI:29105"/>
        <label>1</label>
    </ligand>
</feature>
<feature type="binding site" evidence="1">
    <location>
        <position position="138"/>
    </location>
    <ligand>
        <name>Zn(2+)</name>
        <dbReference type="ChEBI" id="CHEBI:29105"/>
        <label>1</label>
    </ligand>
</feature>
<feature type="binding site" evidence="1">
    <location>
        <position position="138"/>
    </location>
    <ligand>
        <name>Zn(2+)</name>
        <dbReference type="ChEBI" id="CHEBI:29105"/>
        <label>2</label>
    </ligand>
</feature>
<feature type="binding site" evidence="1">
    <location>
        <position position="176"/>
    </location>
    <ligand>
        <name>Zn(2+)</name>
        <dbReference type="ChEBI" id="CHEBI:29105"/>
        <label>2</label>
    </ligand>
</feature>
<name>GLO2_SYNSC</name>
<proteinExistence type="inferred from homology"/>
<gene>
    <name evidence="1" type="primary">gloB</name>
    <name type="ordered locus">Syncc9605_0966</name>
</gene>
<sequence>MHSSLHALPVLQDNVIWIWVRGAEAVVIDPAVAPPVRAWLEKRQLSLAAVLQTHHHADHIGGTPELLQRWPEAEVIASADDRERIPFQTMPVRGGDHVTVLGETVEVMDVAAHTRAHIAFFLPNPKGAEIRPLLFCGDTLFSGGCGRLFEGSAEQMHQALQKLAELPEATQVCCAHEYTEANLQWAVAQQPNNTVLVERYREVRSLRAKGELSLPSSIGLERRTNLFMQASSAAELGFLRSHKDQWRPT</sequence>
<accession>Q3AL08</accession>
<organism>
    <name type="scientific">Synechococcus sp. (strain CC9605)</name>
    <dbReference type="NCBI Taxonomy" id="110662"/>
    <lineage>
        <taxon>Bacteria</taxon>
        <taxon>Bacillati</taxon>
        <taxon>Cyanobacteriota</taxon>
        <taxon>Cyanophyceae</taxon>
        <taxon>Synechococcales</taxon>
        <taxon>Synechococcaceae</taxon>
        <taxon>Synechococcus</taxon>
    </lineage>
</organism>
<evidence type="ECO:0000255" key="1">
    <source>
        <dbReference type="HAMAP-Rule" id="MF_01374"/>
    </source>
</evidence>
<keyword id="KW-0378">Hydrolase</keyword>
<keyword id="KW-0479">Metal-binding</keyword>
<keyword id="KW-0862">Zinc</keyword>
<protein>
    <recommendedName>
        <fullName evidence="1">Hydroxyacylglutathione hydrolase</fullName>
        <ecNumber evidence="1">3.1.2.6</ecNumber>
    </recommendedName>
    <alternativeName>
        <fullName evidence="1">Glyoxalase II</fullName>
        <shortName evidence="1">Glx II</shortName>
    </alternativeName>
</protein>
<dbReference type="EC" id="3.1.2.6" evidence="1"/>
<dbReference type="EMBL" id="CP000110">
    <property type="protein sequence ID" value="ABB34724.1"/>
    <property type="molecule type" value="Genomic_DNA"/>
</dbReference>
<dbReference type="RefSeq" id="WP_011363948.1">
    <property type="nucleotide sequence ID" value="NC_007516.1"/>
</dbReference>
<dbReference type="SMR" id="Q3AL08"/>
<dbReference type="STRING" id="110662.Syncc9605_0966"/>
<dbReference type="KEGG" id="syd:Syncc9605_0966"/>
<dbReference type="eggNOG" id="COG0491">
    <property type="taxonomic scope" value="Bacteria"/>
</dbReference>
<dbReference type="HOGENOM" id="CLU_030571_4_1_3"/>
<dbReference type="OrthoDB" id="9802897at2"/>
<dbReference type="UniPathway" id="UPA00619">
    <property type="reaction ID" value="UER00676"/>
</dbReference>
<dbReference type="GO" id="GO:0004416">
    <property type="term" value="F:hydroxyacylglutathione hydrolase activity"/>
    <property type="evidence" value="ECO:0007669"/>
    <property type="project" value="UniProtKB-UniRule"/>
</dbReference>
<dbReference type="GO" id="GO:0046872">
    <property type="term" value="F:metal ion binding"/>
    <property type="evidence" value="ECO:0007669"/>
    <property type="project" value="UniProtKB-KW"/>
</dbReference>
<dbReference type="GO" id="GO:0019243">
    <property type="term" value="P:methylglyoxal catabolic process to D-lactate via S-lactoyl-glutathione"/>
    <property type="evidence" value="ECO:0007669"/>
    <property type="project" value="InterPro"/>
</dbReference>
<dbReference type="CDD" id="cd07723">
    <property type="entry name" value="hydroxyacylglutathione_hydrolase_MBL-fold"/>
    <property type="match status" value="1"/>
</dbReference>
<dbReference type="Gene3D" id="3.60.15.10">
    <property type="entry name" value="Ribonuclease Z/Hydroxyacylglutathione hydrolase-like"/>
    <property type="match status" value="1"/>
</dbReference>
<dbReference type="HAMAP" id="MF_01374">
    <property type="entry name" value="Glyoxalase_2"/>
    <property type="match status" value="1"/>
</dbReference>
<dbReference type="InterPro" id="IPR035680">
    <property type="entry name" value="Clx_II_MBL"/>
</dbReference>
<dbReference type="InterPro" id="IPR050110">
    <property type="entry name" value="Glyoxalase_II_hydrolase"/>
</dbReference>
<dbReference type="InterPro" id="IPR032282">
    <property type="entry name" value="HAGH_C"/>
</dbReference>
<dbReference type="InterPro" id="IPR017782">
    <property type="entry name" value="Hydroxyacylglutathione_Hdrlase"/>
</dbReference>
<dbReference type="InterPro" id="IPR001279">
    <property type="entry name" value="Metallo-B-lactamas"/>
</dbReference>
<dbReference type="InterPro" id="IPR036866">
    <property type="entry name" value="RibonucZ/Hydroxyglut_hydro"/>
</dbReference>
<dbReference type="NCBIfam" id="TIGR03413">
    <property type="entry name" value="GSH_gloB"/>
    <property type="match status" value="1"/>
</dbReference>
<dbReference type="PANTHER" id="PTHR43705">
    <property type="entry name" value="HYDROXYACYLGLUTATHIONE HYDROLASE"/>
    <property type="match status" value="1"/>
</dbReference>
<dbReference type="PANTHER" id="PTHR43705:SF1">
    <property type="entry name" value="HYDROXYACYLGLUTATHIONE HYDROLASE GLOB"/>
    <property type="match status" value="1"/>
</dbReference>
<dbReference type="Pfam" id="PF16123">
    <property type="entry name" value="HAGH_C"/>
    <property type="match status" value="1"/>
</dbReference>
<dbReference type="Pfam" id="PF00753">
    <property type="entry name" value="Lactamase_B"/>
    <property type="match status" value="1"/>
</dbReference>
<dbReference type="PIRSF" id="PIRSF005457">
    <property type="entry name" value="Glx"/>
    <property type="match status" value="1"/>
</dbReference>
<dbReference type="SMART" id="SM00849">
    <property type="entry name" value="Lactamase_B"/>
    <property type="match status" value="1"/>
</dbReference>
<dbReference type="SUPFAM" id="SSF56281">
    <property type="entry name" value="Metallo-hydrolase/oxidoreductase"/>
    <property type="match status" value="1"/>
</dbReference>